<name>RGYR1_SACS2</name>
<gene>
    <name evidence="2" type="primary">rgy1</name>
    <name evidence="11 13" type="synonym">topR-1</name>
    <name type="ordered locus">SSO0420</name>
</gene>
<protein>
    <recommendedName>
        <fullName evidence="2 12">Reverse gyrase 1</fullName>
        <ecNumber evidence="2 9 10">5.6.2.-</ecNumber>
    </recommendedName>
    <alternativeName>
        <fullName evidence="14 15 16">TopR1</fullName>
    </alternativeName>
</protein>
<keyword id="KW-0067">ATP-binding</keyword>
<keyword id="KW-0963">Cytoplasm</keyword>
<keyword id="KW-0238">DNA-binding</keyword>
<keyword id="KW-0413">Isomerase</keyword>
<keyword id="KW-0460">Magnesium</keyword>
<keyword id="KW-0479">Metal-binding</keyword>
<keyword id="KW-0547">Nucleotide-binding</keyword>
<keyword id="KW-1185">Reference proteome</keyword>
<keyword id="KW-0799">Topoisomerase</keyword>
<keyword id="KW-0862">Zinc</keyword>
<keyword id="KW-0863">Zinc-finger</keyword>
<comment type="function">
    <text evidence="1 9 10 17 18">Modifies the topological state of DNA by introducing positive supercoils in an ATP-dependent process (Probable) (PubMed:15190074, PubMed:16617150, PubMed:21435345, PubMed:31713907). Increases the linking number in steps of +1 (PubMed:21435345). Involved in homeostatic control of DNA topology in balance with type II topoisomerase 6 (TopoVI); levels of TopoVI are constant at 80 and 88 degrees Celsius and TopoVI is probably less active at 88 degrees (characterized enzyme is from S.shibatae B12), so reverse gyrase mediates most of the fine-tuning of DNA topology (PubMed:31713907). Changes the DNA linking number step-by-step in a distributive manner. At low protein to DNA ratios mostly relaxes negatively supercoiled substrate, as ratios rise more positive supercoils are introduced. At 90 degrees Celsius introduces 19 positive supercoils into pTZ18R DNA (probably 2860 bp), less than TopR2 (PubMed:21435345). Relaxes negatively supercoiled DNA in the absence of ATP (PubMed:21435345). It cleaves transiently a single DNA strand and remains covalently bound to the 5' DNA end through a tyrosine residue (Probable) (PubMed:15190074). May be involved in DNA damage response (Probable) (PubMed:15190074). Its activity is inhibited by the DNA-binding protein 7d (Sso7d), suggesting that the Sso7d activity might counteract the overwinding effect of reverse gyrase (By similarity).</text>
</comment>
<comment type="function">
    <text evidence="8">Resolves 4-way Holliday junctions (HJ) with 20 bases in each arm in vitro, distorting the junction (PubMed:20851892). Very high protein levels are required, but total enzyme content of the cell (there are 2 reverse gyrases in this organism) is estimated to be 20-200 molecules/cell (PubMed:20851892). HJ resolution does not require either ATPase activity or the active tyrosine (PubMed:20851892). The individual domains do not resolve HJs but do so when mixed (PubMed:20851892). Also unwinds a fork substrate (PubMed:20851892).</text>
</comment>
<comment type="function">
    <text evidence="10 17 18">There are 2 genes for this protein in the cell. During exponential growth this is the less expressed isoform (about 52 molecules per cell at 80 degrees Celsius, about 28 molecules at 88 degrees Celsius); this isoform is more active at higher temperature (PubMed:31713907). Grows actively at both 80 and 88 degrees Celsius; survives a long exposure at 45 degrees Celsius without DNA replication or cell division occurring (PubMed:31713907). Experiments using whole cell extracts do not distinguish which isoform is present, the results are probably a mixture of the two forms (Probable) (PubMed:15190074, PubMed:16617150).</text>
</comment>
<comment type="catalytic activity">
    <reaction evidence="2">
        <text>ATP + H2O = ADP + phosphate + H(+)</text>
        <dbReference type="Rhea" id="RHEA:13065"/>
        <dbReference type="ChEBI" id="CHEBI:15377"/>
        <dbReference type="ChEBI" id="CHEBI:15378"/>
        <dbReference type="ChEBI" id="CHEBI:30616"/>
        <dbReference type="ChEBI" id="CHEBI:43474"/>
        <dbReference type="ChEBI" id="CHEBI:456216"/>
    </reaction>
</comment>
<comment type="cofactor">
    <cofactor evidence="2">
        <name>Zn(2+)</name>
        <dbReference type="ChEBI" id="CHEBI:29105"/>
    </cofactor>
    <text evidence="2">Binds 1 zinc ion per subunit.</text>
</comment>
<comment type="cofactor">
    <cofactor evidence="2 9">
        <name>Mg(2+)</name>
        <dbReference type="ChEBI" id="CHEBI:18420"/>
    </cofactor>
</comment>
<comment type="activity regulation">
    <text evidence="9 17">At least one of the two reverse gyrase proteins is inhibited by actinomycin D (Probable) (PubMed:15190074). Highly sensitive to NaCl concentrations, maximal positive supercoiling is observed with 10 mM NaCl; as NaCl rises, supercoiling decreases (PubMed:21435345). At 300 mM NaCl relaxes but does not introduce positive supercoils into negatively supercoiled substrate, at 400 mM NaCl does not relax DNA (PubMed:21435345).</text>
</comment>
<comment type="biophysicochemical properties">
    <temperatureDependence>
        <text evidence="8 9 10">Optimum temperature for reverse gyrase activity is 90 degrees Celsius, at lower temperatures fewer positive supercoils are introduced, under 60 degrees Celsius only relaxation of negative supercoils is seen in vitro (PubMed:21435345). Active at 80 degrees, has higher activity at 88 degrees Celsius in vitro (PubMed:31713907). Holliday junction resolution is optimal in vitro at 55 degrees Celsius, at 37 degrees Celsius no resolution occurs (PubMed:20851892).</text>
    </temperatureDependence>
</comment>
<comment type="subunit">
    <text evidence="2">Monomer.</text>
</comment>
<comment type="subcellular location">
    <subcellularLocation>
        <location evidence="17">Cytoplasm</location>
    </subcellularLocation>
    <text evidence="17">Upon UV irradiation up to 60% of the reverse gyrase activity becomes associated with DNA in vivo (PubMed:15190074).</text>
</comment>
<comment type="induction">
    <text evidence="6 7 10 18">Protein levels increase during a shift from 88 to 80 degrees Celsius and decrease upon a shift from 80 to 88 degrees Celsius during exponential growth (at protein level) (PubMed:31713907). Constitutively transcribed during cell growth; no change is seen in the presence of methyl methanesulfonate (MMS) (PubMed:16617150). 0.7 mM MMS reduces the amount of enzyme at a post-translational level via a metalloprotease (at protein level) (Probable) (PubMed:16617150). At 72 degrees Celsius this gene is transcribed at low levels during early and late exponential growth (until about 50 hours), declines as stationary phase starts, disappears by late stationary phase (PubMed:18777006). At 80 degrees Celsius more transcripts accumulate with maximal levels at about 50 hours, declines more slowly than at 72 degrees (PubMed:18777006). Upon a shift from 80 to 72 degrees Celsius this gene is up-regulated within 5 minutes to a maximum increase of 2.4.fold by 30 minutes, then a gradual decline to pre-shift levels (PubMed:18777006). When shifted from 72 to 80 degrees Celsius a slight decline is seen by 30 minutes, transcripts disappear by 24 hours post shift (PubMed:18777006).</text>
</comment>
<comment type="domain">
    <text evidence="2">Both the DNA unwinding and positive supercoiling activities require the cooperation of both domains. The cooperative action between the helicase-like and the topoisomerase domains is specific. The helicase-like domain probably does not directly unwind DNA but acts more likely by driving ATP-dependent conformational changes within the whole enzyme, functioning more like a protein motor. The 'latch' region of the N-terminal domain plays a regulatory role in the enzyme, repressing topoisomerase activity in the absence of ATP and therefore preventing the enzyme from acting as an ATP-independent relaxing enzyme; it also helps to coordinate nucleotide hydrolysis by the ATPase domain with the supercoiling activity of the topoisomerase domain.</text>
</comment>
<comment type="miscellaneous">
    <text evidence="2">This enzyme is the only unique feature of hyperthermophilic bacteria/archaea known and seems to be essential for adaptation to life at high temperatures. It may play a role in stabilization of DNA at high temperatures.</text>
</comment>
<comment type="similarity">
    <text evidence="2">In the N-terminal section; belongs to the DEAD box helicase family. DDVD subfamily.</text>
</comment>
<comment type="similarity">
    <text evidence="2">In the C-terminal section; belongs to the type IA topoisomerase family.</text>
</comment>
<sequence>MTSINKVPPSIYTRSCPNCGGNISSQRLFNGSVCESCLKDDREFSNLSDLINILSENSNLKNLTQIRDVLEEYKKVEEIFGKLLNNSKPIGPQRSWTIRFLRGESFAIIAPPGLGKTTFGLIMSLYNATRNRKSIIIFPTRTLISQTVDKLAKFSELYSYSPRILYNKQSPTQTENILDQLKSGNFDIFISTNRFVIQNLSELSNIKFDFIFVDDVDAALKSGKSAKAILRLVGFTDEDIQTTMKLLRENIGEEEKFGKIQEIRESRLKDKIVIFSSATISRGNPILSSLMGFRPGSSVIYLRNIYDSYIDLTQTCKGQDFEECTLGTVIKLLKRLNDGTLIFVPIDKGAQYADYLASNLRDHGINVESVASSSISKLEKFERGEVSSLVGVATHYGVLVRGIDLPWRVKYSIFVGIPKFKFKIGEYMHPLALTRLLSLVYLVKNDDKVRGLLSYIRKRLRKISPAALAMLAKDIREGKIDDERLKEAYNLVNEYLKDNEFLKKVSDVGDLVIEGDYILMPDYLTYIQASGRTSRLYGANLTTGLSVLLIDNSRLFELLNKKLNLILDEVKWYSLDIDADKLGQVSLSDISAKITEERESLSKIKKEGNVESSSLSVKTTLFIVESPNKAKTISNFFSRPSTRSYGKLRVYETVLGDRVLIVAASGGHIYDLITEDESEKQDDNYVYGVLVKDSKFIPIYSTIKKCEKGHQIVKDLSQNKCPICGSRIVTDKTEVVDILRKLALEVDEVLIGTDPDTEGEKIAWDIYLAIRPFNGNIKRAEFHEVTRRAILNAIKNPREFNDNLVKSQIVRRIEDRWIGFKLSRKLQTEFWEQHCTSISKKNSKDEECKENRNLSAGRVQTPVLDWVVNRYQKYNENKKKYLIIESQDKSIFPFSVLALKKNGLSKNTQIIIHLEDINIKEEEFGPLPPYTTDTLLSDAANLLRIPASDTMRVAQDLFELGLITYHRTDSTRVSNVGISVAETYLKSKQVDISKIFRPRSWGEGGAHEAIRPTKPLDETMLKASIEQGDLELSKQLTFNHFRVYNLIFRRFITSQLPPLVVTKQIVRIRAYTKDNIELELDENKKEFVIGYKLKEGDEFRQTLQDAIYTLFRLYQPLDEKMKGKELSATITGTLNKSDVQLYTEGELISEMKSKQIGRPSTYAVIISTLKKRRYIIESKNLKKIIPTKLGMAVKEYLMENYKQIVSEKRTVKLLEKMNEVEEGKVDYLVLLKELYNEIQTIS</sequence>
<accession>Q97ZZ8</accession>
<organism>
    <name type="scientific">Saccharolobus solfataricus (strain ATCC 35092 / DSM 1617 / JCM 11322 / P2)</name>
    <name type="common">Sulfolobus solfataricus</name>
    <dbReference type="NCBI Taxonomy" id="273057"/>
    <lineage>
        <taxon>Archaea</taxon>
        <taxon>Thermoproteota</taxon>
        <taxon>Thermoprotei</taxon>
        <taxon>Sulfolobales</taxon>
        <taxon>Sulfolobaceae</taxon>
        <taxon>Saccharolobus</taxon>
    </lineage>
</organism>
<proteinExistence type="evidence at protein level"/>
<feature type="chain" id="PRO_0000158092" description="Reverse gyrase 1">
    <location>
        <begin position="1"/>
        <end position="1242"/>
    </location>
</feature>
<feature type="domain" description="Helicase ATP-binding" evidence="2">
    <location>
        <begin position="97"/>
        <end position="298"/>
    </location>
</feature>
<feature type="domain" description="Toprim" evidence="2">
    <location>
        <begin position="619"/>
        <end position="785"/>
    </location>
</feature>
<feature type="domain" description="Topo IA-type catalytic" evidence="5">
    <location>
        <begin position="801"/>
        <end position="1242"/>
    </location>
</feature>
<feature type="zinc finger region" description="RG N-terminal-type" evidence="3">
    <location>
        <begin position="6"/>
        <end position="46"/>
    </location>
</feature>
<feature type="zinc finger region" description="RG C-terminal-type; atypical" evidence="4">
    <location>
        <begin position="703"/>
        <end position="731"/>
    </location>
</feature>
<feature type="region of interest" description="Topoisomerase I" evidence="2">
    <location>
        <begin position="615"/>
        <end position="1242"/>
    </location>
</feature>
<feature type="short sequence motif" description="DEAD box" evidence="2">
    <location>
        <begin position="214"/>
        <end position="217"/>
    </location>
</feature>
<feature type="active site" description="O-(5'-phospho-DNA)-tyrosine intermediate" evidence="5">
    <location>
        <position position="965"/>
    </location>
</feature>
<feature type="binding site" evidence="2">
    <location>
        <position position="16"/>
    </location>
    <ligand>
        <name>Zn(2+)</name>
        <dbReference type="ChEBI" id="CHEBI:29105"/>
        <label>1</label>
    </ligand>
</feature>
<feature type="binding site" evidence="2">
    <location>
        <position position="19"/>
    </location>
    <ligand>
        <name>Zn(2+)</name>
        <dbReference type="ChEBI" id="CHEBI:29105"/>
        <label>1</label>
    </ligand>
</feature>
<feature type="binding site" evidence="2">
    <location>
        <position position="34"/>
    </location>
    <ligand>
        <name>Zn(2+)</name>
        <dbReference type="ChEBI" id="CHEBI:29105"/>
        <label>1</label>
    </ligand>
</feature>
<feature type="binding site" evidence="2">
    <location>
        <position position="37"/>
    </location>
    <ligand>
        <name>Zn(2+)</name>
        <dbReference type="ChEBI" id="CHEBI:29105"/>
        <label>1</label>
    </ligand>
</feature>
<feature type="binding site" evidence="2">
    <location>
        <position position="93"/>
    </location>
    <ligand>
        <name>ATP</name>
        <dbReference type="ChEBI" id="CHEBI:30616"/>
    </ligand>
</feature>
<feature type="binding site" evidence="2">
    <location>
        <begin position="110"/>
        <end position="117"/>
    </location>
    <ligand>
        <name>ATP</name>
        <dbReference type="ChEBI" id="CHEBI:30616"/>
    </ligand>
</feature>
<feature type="binding site" evidence="2">
    <location>
        <position position="625"/>
    </location>
    <ligand>
        <name>Mg(2+)</name>
        <dbReference type="ChEBI" id="CHEBI:18420"/>
        <note>catalytic</note>
    </ligand>
</feature>
<feature type="binding site" evidence="4">
    <location>
        <position position="706"/>
    </location>
    <ligand>
        <name>Zn(2+)</name>
        <dbReference type="ChEBI" id="CHEBI:29105"/>
        <label>2</label>
    </ligand>
</feature>
<feature type="binding site" evidence="4">
    <location>
        <position position="710"/>
    </location>
    <ligand>
        <name>Zn(2+)</name>
        <dbReference type="ChEBI" id="CHEBI:29105"/>
        <label>2</label>
    </ligand>
</feature>
<feature type="binding site" evidence="4">
    <location>
        <position position="721"/>
    </location>
    <ligand>
        <name>Zn(2+)</name>
        <dbReference type="ChEBI" id="CHEBI:29105"/>
        <label>2</label>
    </ligand>
</feature>
<feature type="binding site" evidence="4">
    <location>
        <position position="724"/>
    </location>
    <ligand>
        <name>Zn(2+)</name>
        <dbReference type="ChEBI" id="CHEBI:29105"/>
        <label>2</label>
    </ligand>
</feature>
<feature type="binding site" evidence="2">
    <location>
        <position position="754"/>
    </location>
    <ligand>
        <name>Mg(2+)</name>
        <dbReference type="ChEBI" id="CHEBI:18420"/>
        <note>catalytic</note>
    </ligand>
</feature>
<feature type="mutagenesis site" description="No change in Holliday junction resolution." evidence="8">
    <original>K</original>
    <variation>A</variation>
    <location>
        <position position="116"/>
    </location>
</feature>
<feature type="mutagenesis site" description="No change in Holliday junction resolution." evidence="8">
    <original>Y</original>
    <variation>F</variation>
    <location>
        <position position="965"/>
    </location>
</feature>
<dbReference type="EC" id="5.6.2.-" evidence="2 9 10"/>
<dbReference type="EMBL" id="AE006641">
    <property type="protein sequence ID" value="AAK40747.1"/>
    <property type="molecule type" value="Genomic_DNA"/>
</dbReference>
<dbReference type="PIR" id="D90186">
    <property type="entry name" value="D90186"/>
</dbReference>
<dbReference type="SMR" id="Q97ZZ8"/>
<dbReference type="FunCoup" id="Q97ZZ8">
    <property type="interactions" value="1"/>
</dbReference>
<dbReference type="STRING" id="273057.SSO0420"/>
<dbReference type="PaxDb" id="273057-SSO0420"/>
<dbReference type="EnsemblBacteria" id="AAK40747">
    <property type="protein sequence ID" value="AAK40747"/>
    <property type="gene ID" value="SSO0420"/>
</dbReference>
<dbReference type="KEGG" id="sso:SSO0420"/>
<dbReference type="PATRIC" id="fig|273057.12.peg.414"/>
<dbReference type="eggNOG" id="arCOG01526">
    <property type="taxonomic scope" value="Archaea"/>
</dbReference>
<dbReference type="HOGENOM" id="CLU_002886_0_0_2"/>
<dbReference type="InParanoid" id="Q97ZZ8"/>
<dbReference type="PhylomeDB" id="Q97ZZ8"/>
<dbReference type="Proteomes" id="UP000001974">
    <property type="component" value="Chromosome"/>
</dbReference>
<dbReference type="GO" id="GO:0005737">
    <property type="term" value="C:cytoplasm"/>
    <property type="evidence" value="ECO:0000314"/>
    <property type="project" value="UniProtKB"/>
</dbReference>
<dbReference type="GO" id="GO:0005524">
    <property type="term" value="F:ATP binding"/>
    <property type="evidence" value="ECO:0007669"/>
    <property type="project" value="UniProtKB-UniRule"/>
</dbReference>
<dbReference type="GO" id="GO:0016887">
    <property type="term" value="F:ATP hydrolysis activity"/>
    <property type="evidence" value="ECO:0007669"/>
    <property type="project" value="InterPro"/>
</dbReference>
<dbReference type="GO" id="GO:0003677">
    <property type="term" value="F:DNA binding"/>
    <property type="evidence" value="ECO:0007669"/>
    <property type="project" value="UniProtKB-UniRule"/>
</dbReference>
<dbReference type="GO" id="GO:0003918">
    <property type="term" value="F:DNA topoisomerase type II (double strand cut, ATP-hydrolyzing) activity"/>
    <property type="evidence" value="ECO:0007669"/>
    <property type="project" value="UniProtKB-EC"/>
</dbReference>
<dbReference type="GO" id="GO:0160097">
    <property type="term" value="F:reverse gyrase activity"/>
    <property type="evidence" value="ECO:0000314"/>
    <property type="project" value="UniProtKB"/>
</dbReference>
<dbReference type="GO" id="GO:0008270">
    <property type="term" value="F:zinc ion binding"/>
    <property type="evidence" value="ECO:0007669"/>
    <property type="project" value="UniProtKB-UniRule"/>
</dbReference>
<dbReference type="GO" id="GO:0006265">
    <property type="term" value="P:DNA topological change"/>
    <property type="evidence" value="ECO:0000314"/>
    <property type="project" value="UniProtKB"/>
</dbReference>
<dbReference type="CDD" id="cd17924">
    <property type="entry name" value="DDXDc_reverse_gyrase"/>
    <property type="match status" value="1"/>
</dbReference>
<dbReference type="CDD" id="cd18798">
    <property type="entry name" value="SF2_C_reverse_gyrase"/>
    <property type="match status" value="1"/>
</dbReference>
<dbReference type="CDD" id="cd00186">
    <property type="entry name" value="TOP1Ac"/>
    <property type="match status" value="1"/>
</dbReference>
<dbReference type="CDD" id="cd03361">
    <property type="entry name" value="TOPRIM_TopoIA_RevGyr"/>
    <property type="match status" value="1"/>
</dbReference>
<dbReference type="Gene3D" id="2.60.510.20">
    <property type="match status" value="1"/>
</dbReference>
<dbReference type="Gene3D" id="3.40.50.140">
    <property type="match status" value="1"/>
</dbReference>
<dbReference type="Gene3D" id="3.40.50.300">
    <property type="entry name" value="P-loop containing nucleotide triphosphate hydrolases"/>
    <property type="match status" value="3"/>
</dbReference>
<dbReference type="Gene3D" id="1.10.460.10">
    <property type="entry name" value="Topoisomerase I, domain 2"/>
    <property type="match status" value="1"/>
</dbReference>
<dbReference type="Gene3D" id="1.10.290.10">
    <property type="entry name" value="Topoisomerase I, domain 4"/>
    <property type="match status" value="1"/>
</dbReference>
<dbReference type="HAMAP" id="MF_01125">
    <property type="entry name" value="Reverse_gyrase"/>
    <property type="match status" value="1"/>
</dbReference>
<dbReference type="InterPro" id="IPR003593">
    <property type="entry name" value="AAA+_ATPase"/>
</dbReference>
<dbReference type="InterPro" id="IPR011545">
    <property type="entry name" value="DEAD/DEAH_box_helicase_dom"/>
</dbReference>
<dbReference type="InterPro" id="IPR014001">
    <property type="entry name" value="Helicase_ATP-bd"/>
</dbReference>
<dbReference type="InterPro" id="IPR027417">
    <property type="entry name" value="P-loop_NTPase"/>
</dbReference>
<dbReference type="InterPro" id="IPR005736">
    <property type="entry name" value="Reverse_gyrase"/>
</dbReference>
<dbReference type="InterPro" id="IPR003601">
    <property type="entry name" value="Topo_IA_2"/>
</dbReference>
<dbReference type="InterPro" id="IPR013497">
    <property type="entry name" value="Topo_IA_cen"/>
</dbReference>
<dbReference type="InterPro" id="IPR013824">
    <property type="entry name" value="Topo_IA_cen_sub1"/>
</dbReference>
<dbReference type="InterPro" id="IPR013826">
    <property type="entry name" value="Topo_IA_cen_sub3"/>
</dbReference>
<dbReference type="InterPro" id="IPR023405">
    <property type="entry name" value="Topo_IA_core_domain"/>
</dbReference>
<dbReference type="InterPro" id="IPR003602">
    <property type="entry name" value="Topo_IA_DNA-bd_dom"/>
</dbReference>
<dbReference type="InterPro" id="IPR006171">
    <property type="entry name" value="TOPRIM_dom"/>
</dbReference>
<dbReference type="InterPro" id="IPR034142">
    <property type="entry name" value="TOPRIM_RevGyr"/>
</dbReference>
<dbReference type="InterPro" id="IPR040569">
    <property type="entry name" value="Znf_Rg"/>
</dbReference>
<dbReference type="NCBIfam" id="TIGR01054">
    <property type="entry name" value="rgy"/>
    <property type="match status" value="1"/>
</dbReference>
<dbReference type="PANTHER" id="PTHR43505">
    <property type="entry name" value="REVERSE GYRASE"/>
    <property type="match status" value="1"/>
</dbReference>
<dbReference type="PANTHER" id="PTHR43505:SF1">
    <property type="entry name" value="REVERSE GYRASE"/>
    <property type="match status" value="1"/>
</dbReference>
<dbReference type="Pfam" id="PF00270">
    <property type="entry name" value="DEAD"/>
    <property type="match status" value="1"/>
</dbReference>
<dbReference type="Pfam" id="PF01131">
    <property type="entry name" value="Topoisom_bac"/>
    <property type="match status" value="1"/>
</dbReference>
<dbReference type="Pfam" id="PF01751">
    <property type="entry name" value="Toprim"/>
    <property type="match status" value="1"/>
</dbReference>
<dbReference type="Pfam" id="PF17915">
    <property type="entry name" value="zf_Rg"/>
    <property type="match status" value="1"/>
</dbReference>
<dbReference type="PRINTS" id="PR00417">
    <property type="entry name" value="PRTPISMRASEI"/>
</dbReference>
<dbReference type="SMART" id="SM00382">
    <property type="entry name" value="AAA"/>
    <property type="match status" value="1"/>
</dbReference>
<dbReference type="SMART" id="SM00487">
    <property type="entry name" value="DEXDc"/>
    <property type="match status" value="1"/>
</dbReference>
<dbReference type="SMART" id="SM00437">
    <property type="entry name" value="TOP1Ac"/>
    <property type="match status" value="1"/>
</dbReference>
<dbReference type="SMART" id="SM00436">
    <property type="entry name" value="TOP1Bc"/>
    <property type="match status" value="1"/>
</dbReference>
<dbReference type="SMART" id="SM00493">
    <property type="entry name" value="TOPRIM"/>
    <property type="match status" value="1"/>
</dbReference>
<dbReference type="SUPFAM" id="SSF52540">
    <property type="entry name" value="P-loop containing nucleoside triphosphate hydrolases"/>
    <property type="match status" value="2"/>
</dbReference>
<dbReference type="SUPFAM" id="SSF56712">
    <property type="entry name" value="Prokaryotic type I DNA topoisomerase"/>
    <property type="match status" value="1"/>
</dbReference>
<dbReference type="PROSITE" id="PS51192">
    <property type="entry name" value="HELICASE_ATP_BIND_1"/>
    <property type="match status" value="1"/>
</dbReference>
<dbReference type="PROSITE" id="PS52039">
    <property type="entry name" value="TOPO_IA_2"/>
    <property type="match status" value="1"/>
</dbReference>
<dbReference type="PROSITE" id="PS50880">
    <property type="entry name" value="TOPRIM"/>
    <property type="match status" value="1"/>
</dbReference>
<dbReference type="PROSITE" id="PS52037">
    <property type="entry name" value="ZF_RG_C"/>
    <property type="match status" value="1"/>
</dbReference>
<dbReference type="PROSITE" id="PS52036">
    <property type="entry name" value="ZF_RG_N"/>
    <property type="match status" value="1"/>
</dbReference>
<evidence type="ECO:0000250" key="1">
    <source>
        <dbReference type="UniProtKB" id="P74759"/>
    </source>
</evidence>
<evidence type="ECO:0000255" key="2">
    <source>
        <dbReference type="HAMAP-Rule" id="MF_01125"/>
    </source>
</evidence>
<evidence type="ECO:0000255" key="3">
    <source>
        <dbReference type="PROSITE-ProRule" id="PRU01380"/>
    </source>
</evidence>
<evidence type="ECO:0000255" key="4">
    <source>
        <dbReference type="PROSITE-ProRule" id="PRU01381"/>
    </source>
</evidence>
<evidence type="ECO:0000255" key="5">
    <source>
        <dbReference type="PROSITE-ProRule" id="PRU01383"/>
    </source>
</evidence>
<evidence type="ECO:0000269" key="6">
    <source>
    </source>
</evidence>
<evidence type="ECO:0000269" key="7">
    <source>
    </source>
</evidence>
<evidence type="ECO:0000269" key="8">
    <source>
    </source>
</evidence>
<evidence type="ECO:0000269" key="9">
    <source>
    </source>
</evidence>
<evidence type="ECO:0000269" key="10">
    <source>
    </source>
</evidence>
<evidence type="ECO:0000303" key="11">
    <source>
    </source>
</evidence>
<evidence type="ECO:0000303" key="12">
    <source>
    </source>
</evidence>
<evidence type="ECO:0000303" key="13">
    <source>
    </source>
</evidence>
<evidence type="ECO:0000303" key="14">
    <source>
    </source>
</evidence>
<evidence type="ECO:0000303" key="15">
    <source>
    </source>
</evidence>
<evidence type="ECO:0000303" key="16">
    <source>
    </source>
</evidence>
<evidence type="ECO:0000305" key="17">
    <source>
    </source>
</evidence>
<evidence type="ECO:0000305" key="18">
    <source>
    </source>
</evidence>
<reference key="1">
    <citation type="journal article" date="2001" name="Proc. Natl. Acad. Sci. U.S.A.">
        <title>The complete genome of the crenarchaeon Sulfolobus solfataricus P2.</title>
        <authorList>
            <person name="She Q."/>
            <person name="Singh R.K."/>
            <person name="Confalonieri F."/>
            <person name="Zivanovic Y."/>
            <person name="Allard G."/>
            <person name="Awayez M.J."/>
            <person name="Chan-Weiher C.C.-Y."/>
            <person name="Clausen I.G."/>
            <person name="Curtis B.A."/>
            <person name="De Moors A."/>
            <person name="Erauso G."/>
            <person name="Fletcher C."/>
            <person name="Gordon P.M.K."/>
            <person name="Heikamp-de Jong I."/>
            <person name="Jeffries A.C."/>
            <person name="Kozera C.J."/>
            <person name="Medina N."/>
            <person name="Peng X."/>
            <person name="Thi-Ngoc H.P."/>
            <person name="Redder P."/>
            <person name="Schenk M.E."/>
            <person name="Theriault C."/>
            <person name="Tolstrup N."/>
            <person name="Charlebois R.L."/>
            <person name="Doolittle W.F."/>
            <person name="Duguet M."/>
            <person name="Gaasterland T."/>
            <person name="Garrett R.A."/>
            <person name="Ragan M.A."/>
            <person name="Sensen C.W."/>
            <person name="Van der Oost J."/>
        </authorList>
    </citation>
    <scope>NUCLEOTIDE SEQUENCE [LARGE SCALE GENOMIC DNA]</scope>
    <source>
        <strain>ATCC 35092 / DSM 1617 / JCM 11322 / P2</strain>
    </source>
</reference>
<reference key="2">
    <citation type="journal article" date="2004" name="J. Biol. Chem.">
        <title>Reverse gyrase recruitment to DNA after UV light irradiation in Sulfolobus solfataricus.</title>
        <authorList>
            <person name="Napoli A."/>
            <person name="Valenti A."/>
            <person name="Salerno V."/>
            <person name="Nadal M."/>
            <person name="Garnier F."/>
            <person name="Rossi M."/>
            <person name="Ciaramella M."/>
        </authorList>
    </citation>
    <scope>FUNCTION</scope>
    <scope>CATALYTIC ACTIVITY</scope>
    <scope>REACTION MECHANISM</scope>
    <scope>ACTIVITY REGULATION</scope>
    <scope>SUBCELLULAR LOCATION</scope>
    <source>
        <strain>ATCC 35092 / DSM 1617 / JCM 11322 / P2</strain>
    </source>
</reference>
<reference key="3">
    <citation type="journal article" date="2006" name="Nucleic Acids Res.">
        <title>Selective degradation of reverse gyrase and DNA fragmentation induced by alkylating agent in the archaeon Sulfolobus solfataricus.</title>
        <authorList>
            <person name="Valenti A."/>
            <person name="Napoli A."/>
            <person name="Ferrara M.C."/>
            <person name="Nadal M."/>
            <person name="Rossi M."/>
            <person name="Ciaramella M."/>
        </authorList>
    </citation>
    <scope>FUNCTION</scope>
    <scope>CATALYTIC ACTIVITY</scope>
    <scope>INDUCTION</scope>
    <source>
        <strain>ATCC 35092 / DSM 1617 / JCM 11322 / P2</strain>
    </source>
</reference>
<reference key="4">
    <citation type="journal article" date="2008" name="Extremophiles">
        <title>Transcriptional analysis of the two reverse gyrase encoding genes of Sulfolobus solfataricus P2 in relation to the growth phases and temperature conditions.</title>
        <authorList>
            <person name="Garnier F."/>
            <person name="Nadal M."/>
        </authorList>
    </citation>
    <scope>INDUCTION</scope>
    <source>
        <strain>ATCC 35092 / DSM 1617 / JCM 11322 / P2</strain>
    </source>
</reference>
<reference key="5">
    <citation type="journal article" date="2011" name="J. Mol. Biol.">
        <title>TopR2, the second reverse gyrase of Sulfolobus solfataricus, exhibits unusual properties.</title>
        <authorList>
            <person name="Bizard A."/>
            <person name="Garnier F."/>
            <person name="Nadal M."/>
        </authorList>
    </citation>
    <scope>FUNCTION</scope>
    <scope>CATALYTIC ACTIVITY</scope>
    <scope>REACTION MECHANISM</scope>
    <scope>COFACTOR</scope>
    <scope>ACTIVITY REGULATION</scope>
    <scope>BIOPHYSICOCHEMICAL PROPERTIES</scope>
</reference>
<reference key="6">
    <citation type="journal article" date="2010" name="J. Biol. Chem.">
        <title>The archaeal topoisomerase reverse gyrase is a helix-destabilizing protein that unwinds four-way DNA junctions.</title>
        <authorList>
            <person name="Valenti A."/>
            <person name="Perugino G."/>
            <person name="Varriale A."/>
            <person name="D'Auria S."/>
            <person name="Rossi M."/>
            <person name="Ciaramella M."/>
        </authorList>
    </citation>
    <scope>FUNCTION AS A HOLLIDAY JUNCTION RESOLVASE</scope>
    <scope>BIOPHYSICOCHEMICAL PROPERTIES</scope>
    <scope>MUTAGENESIS OF LYS-116 AND TYR-965</scope>
    <source>
        <strain>ATCC 35092 / DSM 1617 / JCM 11322 / P2</strain>
    </source>
</reference>
<reference key="7">
    <citation type="journal article" date="2020" name="Mol. Microbiol.">
        <title>The reverse gyrase TopR1 is responsible for the homeostatic control of DNA supercoiling in the hyperthermophilic archaeon Sulfolobus solfataricus.</title>
        <authorList>
            <person name="Couturier M."/>
            <person name="Gadelle D."/>
            <person name="Forterre P."/>
            <person name="Nadal M."/>
            <person name="Garnier F."/>
        </authorList>
    </citation>
    <scope>FUNCTION</scope>
    <scope>CATALYTIC ACTIVITY</scope>
    <scope>PROTEIN ABUNDANCE</scope>
    <scope>BIOPHYSICOCHEMICAL PROPERTIES</scope>
    <scope>INDUCTION</scope>
    <source>
        <strain>ATCC 35092 / DSM 1617 / JCM 11322 / P2</strain>
    </source>
</reference>